<protein>
    <recommendedName>
        <fullName evidence="1">Small ribosomal subunit protein uS10</fullName>
    </recommendedName>
    <alternativeName>
        <fullName evidence="2">30S ribosomal protein S10</fullName>
    </alternativeName>
</protein>
<gene>
    <name evidence="1" type="primary">rpsJ</name>
    <name type="ordered locus">Tmel_0952</name>
</gene>
<proteinExistence type="inferred from homology"/>
<reference key="1">
    <citation type="submission" date="2007-05" db="EMBL/GenBank/DDBJ databases">
        <title>Complete sequence of Thermosipho melanesiensis BI429.</title>
        <authorList>
            <consortium name="US DOE Joint Genome Institute"/>
            <person name="Copeland A."/>
            <person name="Lucas S."/>
            <person name="Lapidus A."/>
            <person name="Barry K."/>
            <person name="Glavina del Rio T."/>
            <person name="Dalin E."/>
            <person name="Tice H."/>
            <person name="Pitluck S."/>
            <person name="Chertkov O."/>
            <person name="Brettin T."/>
            <person name="Bruce D."/>
            <person name="Detter J.C."/>
            <person name="Han C."/>
            <person name="Schmutz J."/>
            <person name="Larimer F."/>
            <person name="Land M."/>
            <person name="Hauser L."/>
            <person name="Kyrpides N."/>
            <person name="Mikhailova N."/>
            <person name="Nelson K."/>
            <person name="Gogarten J.P."/>
            <person name="Noll K."/>
            <person name="Richardson P."/>
        </authorList>
    </citation>
    <scope>NUCLEOTIDE SEQUENCE [LARGE SCALE GENOMIC DNA]</scope>
    <source>
        <strain>DSM 12029 / CIP 104789 / BI429</strain>
    </source>
</reference>
<evidence type="ECO:0000255" key="1">
    <source>
        <dbReference type="HAMAP-Rule" id="MF_00508"/>
    </source>
</evidence>
<evidence type="ECO:0000305" key="2"/>
<keyword id="KW-0687">Ribonucleoprotein</keyword>
<keyword id="KW-0689">Ribosomal protein</keyword>
<name>RS10_THEM4</name>
<dbReference type="EMBL" id="CP000716">
    <property type="protein sequence ID" value="ABR30813.1"/>
    <property type="molecule type" value="Genomic_DNA"/>
</dbReference>
<dbReference type="RefSeq" id="WP_012057174.1">
    <property type="nucleotide sequence ID" value="NC_009616.1"/>
</dbReference>
<dbReference type="SMR" id="A6LLL2"/>
<dbReference type="STRING" id="391009.Tmel_0952"/>
<dbReference type="KEGG" id="tme:Tmel_0952"/>
<dbReference type="eggNOG" id="COG0051">
    <property type="taxonomic scope" value="Bacteria"/>
</dbReference>
<dbReference type="HOGENOM" id="CLU_122625_1_3_0"/>
<dbReference type="OrthoDB" id="9804464at2"/>
<dbReference type="Proteomes" id="UP000001110">
    <property type="component" value="Chromosome"/>
</dbReference>
<dbReference type="GO" id="GO:1990904">
    <property type="term" value="C:ribonucleoprotein complex"/>
    <property type="evidence" value="ECO:0007669"/>
    <property type="project" value="UniProtKB-KW"/>
</dbReference>
<dbReference type="GO" id="GO:0005840">
    <property type="term" value="C:ribosome"/>
    <property type="evidence" value="ECO:0007669"/>
    <property type="project" value="UniProtKB-KW"/>
</dbReference>
<dbReference type="GO" id="GO:0003735">
    <property type="term" value="F:structural constituent of ribosome"/>
    <property type="evidence" value="ECO:0007669"/>
    <property type="project" value="InterPro"/>
</dbReference>
<dbReference type="GO" id="GO:0000049">
    <property type="term" value="F:tRNA binding"/>
    <property type="evidence" value="ECO:0007669"/>
    <property type="project" value="UniProtKB-UniRule"/>
</dbReference>
<dbReference type="GO" id="GO:0006412">
    <property type="term" value="P:translation"/>
    <property type="evidence" value="ECO:0007669"/>
    <property type="project" value="UniProtKB-UniRule"/>
</dbReference>
<dbReference type="FunFam" id="3.30.70.600:FF:000001">
    <property type="entry name" value="30S ribosomal protein S10"/>
    <property type="match status" value="1"/>
</dbReference>
<dbReference type="Gene3D" id="3.30.70.600">
    <property type="entry name" value="Ribosomal protein S10 domain"/>
    <property type="match status" value="1"/>
</dbReference>
<dbReference type="HAMAP" id="MF_00508">
    <property type="entry name" value="Ribosomal_uS10"/>
    <property type="match status" value="1"/>
</dbReference>
<dbReference type="InterPro" id="IPR001848">
    <property type="entry name" value="Ribosomal_uS10"/>
</dbReference>
<dbReference type="InterPro" id="IPR018268">
    <property type="entry name" value="Ribosomal_uS10_CS"/>
</dbReference>
<dbReference type="InterPro" id="IPR027486">
    <property type="entry name" value="Ribosomal_uS10_dom"/>
</dbReference>
<dbReference type="InterPro" id="IPR036838">
    <property type="entry name" value="Ribosomal_uS10_dom_sf"/>
</dbReference>
<dbReference type="NCBIfam" id="NF001861">
    <property type="entry name" value="PRK00596.1"/>
    <property type="match status" value="1"/>
</dbReference>
<dbReference type="NCBIfam" id="TIGR01049">
    <property type="entry name" value="rpsJ_bact"/>
    <property type="match status" value="1"/>
</dbReference>
<dbReference type="PANTHER" id="PTHR11700">
    <property type="entry name" value="30S RIBOSOMAL PROTEIN S10 FAMILY MEMBER"/>
    <property type="match status" value="1"/>
</dbReference>
<dbReference type="Pfam" id="PF00338">
    <property type="entry name" value="Ribosomal_S10"/>
    <property type="match status" value="1"/>
</dbReference>
<dbReference type="PRINTS" id="PR00971">
    <property type="entry name" value="RIBOSOMALS10"/>
</dbReference>
<dbReference type="SMART" id="SM01403">
    <property type="entry name" value="Ribosomal_S10"/>
    <property type="match status" value="1"/>
</dbReference>
<dbReference type="SUPFAM" id="SSF54999">
    <property type="entry name" value="Ribosomal protein S10"/>
    <property type="match status" value="1"/>
</dbReference>
<dbReference type="PROSITE" id="PS00361">
    <property type="entry name" value="RIBOSOMAL_S10"/>
    <property type="match status" value="1"/>
</dbReference>
<sequence length="102" mass="11662">MPGQKIRIRLKAYDHKLLDESAKKIVEVVKQTNAKVSGPVPLPTERTLYVVLRSPLKHKDSREQFEKRVHKRMIDILEPSPKTIDALMKINLPAGVDVEINL</sequence>
<organism>
    <name type="scientific">Thermosipho melanesiensis (strain DSM 12029 / CIP 104789 / BI429)</name>
    <dbReference type="NCBI Taxonomy" id="391009"/>
    <lineage>
        <taxon>Bacteria</taxon>
        <taxon>Thermotogati</taxon>
        <taxon>Thermotogota</taxon>
        <taxon>Thermotogae</taxon>
        <taxon>Thermotogales</taxon>
        <taxon>Fervidobacteriaceae</taxon>
        <taxon>Thermosipho</taxon>
    </lineage>
</organism>
<accession>A6LLL2</accession>
<feature type="chain" id="PRO_1000015130" description="Small ribosomal subunit protein uS10">
    <location>
        <begin position="1"/>
        <end position="102"/>
    </location>
</feature>
<comment type="function">
    <text evidence="1">Involved in the binding of tRNA to the ribosomes.</text>
</comment>
<comment type="subunit">
    <text evidence="1">Part of the 30S ribosomal subunit.</text>
</comment>
<comment type="similarity">
    <text evidence="1">Belongs to the universal ribosomal protein uS10 family.</text>
</comment>